<keyword id="KW-0007">Acetylation</keyword>
<keyword id="KW-0158">Chromosome</keyword>
<keyword id="KW-0378">Hydrolase</keyword>
<keyword id="KW-0539">Nucleus</keyword>
<keyword id="KW-0597">Phosphoprotein</keyword>
<keyword id="KW-1185">Reference proteome</keyword>
<dbReference type="EC" id="3.5.1.-" evidence="1"/>
<dbReference type="EC" id="3.2.2.-" evidence="1"/>
<dbReference type="EMBL" id="BC116164">
    <property type="protein sequence ID" value="AAI16165.1"/>
    <property type="molecule type" value="mRNA"/>
</dbReference>
<dbReference type="RefSeq" id="NP_001070581.1">
    <property type="nucleotide sequence ID" value="NM_001077113.1"/>
</dbReference>
<dbReference type="RefSeq" id="XP_005223565.1">
    <property type="nucleotide sequence ID" value="XM_005223508.3"/>
</dbReference>
<dbReference type="RefSeq" id="XP_005223566.1">
    <property type="nucleotide sequence ID" value="XM_005223509.2"/>
</dbReference>
<dbReference type="RefSeq" id="XP_005223567.1">
    <property type="nucleotide sequence ID" value="XM_005223510.4"/>
</dbReference>
<dbReference type="RefSeq" id="XP_005223568.1">
    <property type="nucleotide sequence ID" value="XM_005223511.4"/>
</dbReference>
<dbReference type="SMR" id="Q1LZ74"/>
<dbReference type="FunCoup" id="Q1LZ74">
    <property type="interactions" value="1082"/>
</dbReference>
<dbReference type="STRING" id="9913.ENSBTAP00000007840"/>
<dbReference type="PaxDb" id="9913-ENSBTAP00000007840"/>
<dbReference type="Ensembl" id="ENSBTAT00000007840.5">
    <property type="protein sequence ID" value="ENSBTAP00000007840.4"/>
    <property type="gene ID" value="ENSBTAG00000005975.6"/>
</dbReference>
<dbReference type="GeneID" id="768056"/>
<dbReference type="KEGG" id="bta:768056"/>
<dbReference type="CTD" id="221443"/>
<dbReference type="VEuPathDB" id="HostDB:ENSBTAG00000005975"/>
<dbReference type="VGNC" id="VGNC:32390">
    <property type="gene designation" value="OARD1"/>
</dbReference>
<dbReference type="eggNOG" id="ENOG502RXG1">
    <property type="taxonomic scope" value="Eukaryota"/>
</dbReference>
<dbReference type="GeneTree" id="ENSGT00390000006988"/>
<dbReference type="HOGENOM" id="CLU_054419_4_1_1"/>
<dbReference type="InParanoid" id="Q1LZ74"/>
<dbReference type="OMA" id="CHCLKNG"/>
<dbReference type="OrthoDB" id="2155246at2759"/>
<dbReference type="TreeFam" id="TF324128"/>
<dbReference type="Proteomes" id="UP000009136">
    <property type="component" value="Chromosome 23"/>
</dbReference>
<dbReference type="Bgee" id="ENSBTAG00000005975">
    <property type="expression patterns" value="Expressed in oocyte and 108 other cell types or tissues"/>
</dbReference>
<dbReference type="GO" id="GO:0005730">
    <property type="term" value="C:nucleolus"/>
    <property type="evidence" value="ECO:0000250"/>
    <property type="project" value="UniProtKB"/>
</dbReference>
<dbReference type="GO" id="GO:0005654">
    <property type="term" value="C:nucleoplasm"/>
    <property type="evidence" value="ECO:0000250"/>
    <property type="project" value="UniProtKB"/>
</dbReference>
<dbReference type="GO" id="GO:0090734">
    <property type="term" value="C:site of DNA damage"/>
    <property type="evidence" value="ECO:0000250"/>
    <property type="project" value="UniProtKB"/>
</dbReference>
<dbReference type="GO" id="GO:0047407">
    <property type="term" value="F:ADP-ribosyl-[dinitrogen reductase] hydrolase activity"/>
    <property type="evidence" value="ECO:0000318"/>
    <property type="project" value="GO_Central"/>
</dbReference>
<dbReference type="GO" id="GO:0140293">
    <property type="term" value="F:ADP-ribosylglutamate hydrolase activity"/>
    <property type="evidence" value="ECO:0000250"/>
    <property type="project" value="UniProtKB"/>
</dbReference>
<dbReference type="GO" id="GO:0061463">
    <property type="term" value="F:O-acetyl-ADP-ribose deacetylase activity"/>
    <property type="evidence" value="ECO:0000250"/>
    <property type="project" value="UniProtKB"/>
</dbReference>
<dbReference type="GO" id="GO:0001883">
    <property type="term" value="F:purine nucleoside binding"/>
    <property type="evidence" value="ECO:0000250"/>
    <property type="project" value="UniProtKB"/>
</dbReference>
<dbReference type="GO" id="GO:0006974">
    <property type="term" value="P:DNA damage response"/>
    <property type="evidence" value="ECO:0000250"/>
    <property type="project" value="UniProtKB"/>
</dbReference>
<dbReference type="GO" id="GO:0140291">
    <property type="term" value="P:peptidyl-glutamate ADP-deribosylation"/>
    <property type="evidence" value="ECO:0000250"/>
    <property type="project" value="UniProtKB"/>
</dbReference>
<dbReference type="GO" id="GO:0051725">
    <property type="term" value="P:protein de-ADP-ribosylation"/>
    <property type="evidence" value="ECO:0000250"/>
    <property type="project" value="UniProtKB"/>
</dbReference>
<dbReference type="GO" id="GO:0042278">
    <property type="term" value="P:purine nucleoside metabolic process"/>
    <property type="evidence" value="ECO:0000250"/>
    <property type="project" value="UniProtKB"/>
</dbReference>
<dbReference type="CDD" id="cd02901">
    <property type="entry name" value="Macro_Poa1p-like"/>
    <property type="match status" value="1"/>
</dbReference>
<dbReference type="FunFam" id="3.40.220.10:FF:000007">
    <property type="entry name" value="O-acetyl-ADP-ribose deacetylase 1"/>
    <property type="match status" value="1"/>
</dbReference>
<dbReference type="Gene3D" id="3.40.220.10">
    <property type="entry name" value="Leucine Aminopeptidase, subunit E, domain 1"/>
    <property type="match status" value="1"/>
</dbReference>
<dbReference type="InterPro" id="IPR050892">
    <property type="entry name" value="ADP-ribose_metab_enzymes"/>
</dbReference>
<dbReference type="InterPro" id="IPR002589">
    <property type="entry name" value="Macro_dom"/>
</dbReference>
<dbReference type="InterPro" id="IPR043472">
    <property type="entry name" value="Macro_dom-like"/>
</dbReference>
<dbReference type="PANTHER" id="PTHR12521:SF0">
    <property type="entry name" value="ADP-RIBOSE GLYCOHYDROLASE OARD1"/>
    <property type="match status" value="1"/>
</dbReference>
<dbReference type="PANTHER" id="PTHR12521">
    <property type="entry name" value="PROTEIN C6ORF130"/>
    <property type="match status" value="1"/>
</dbReference>
<dbReference type="Pfam" id="PF01661">
    <property type="entry name" value="Macro"/>
    <property type="match status" value="1"/>
</dbReference>
<dbReference type="SMART" id="SM00506">
    <property type="entry name" value="A1pp"/>
    <property type="match status" value="1"/>
</dbReference>
<dbReference type="SUPFAM" id="SSF52949">
    <property type="entry name" value="Macro domain-like"/>
    <property type="match status" value="1"/>
</dbReference>
<dbReference type="PROSITE" id="PS51154">
    <property type="entry name" value="MACRO"/>
    <property type="match status" value="1"/>
</dbReference>
<proteinExistence type="evidence at transcript level"/>
<protein>
    <recommendedName>
        <fullName evidence="3">ADP-ribose glycohydrolase OARD1</fullName>
    </recommendedName>
    <alternativeName>
        <fullName>O-acetyl-ADP-ribose deacetylase 1</fullName>
        <ecNumber evidence="1">3.5.1.-</ecNumber>
    </alternativeName>
    <alternativeName>
        <fullName evidence="1">Terminal ADP-ribose protein glycohydrolase 1</fullName>
    </alternativeName>
    <alternativeName>
        <fullName evidence="3">[Protein ADP-ribosylglutamate] hydrolase OARD1</fullName>
        <ecNumber evidence="1">3.2.2.-</ecNumber>
    </alternativeName>
</protein>
<reference key="1">
    <citation type="submission" date="2006-05" db="EMBL/GenBank/DDBJ databases">
        <authorList>
            <consortium name="NIH - Mammalian Gene Collection (MGC) project"/>
        </authorList>
    </citation>
    <scope>NUCLEOTIDE SEQUENCE [LARGE SCALE MRNA]</scope>
    <source>
        <strain>Hereford</strain>
        <tissue>Fetal lung</tissue>
    </source>
</reference>
<evidence type="ECO:0000250" key="1">
    <source>
        <dbReference type="UniProtKB" id="Q9Y530"/>
    </source>
</evidence>
<evidence type="ECO:0000255" key="2">
    <source>
        <dbReference type="PROSITE-ProRule" id="PRU00490"/>
    </source>
</evidence>
<evidence type="ECO:0000305" key="3"/>
<organism>
    <name type="scientific">Bos taurus</name>
    <name type="common">Bovine</name>
    <dbReference type="NCBI Taxonomy" id="9913"/>
    <lineage>
        <taxon>Eukaryota</taxon>
        <taxon>Metazoa</taxon>
        <taxon>Chordata</taxon>
        <taxon>Craniata</taxon>
        <taxon>Vertebrata</taxon>
        <taxon>Euteleostomi</taxon>
        <taxon>Mammalia</taxon>
        <taxon>Eutheria</taxon>
        <taxon>Laurasiatheria</taxon>
        <taxon>Artiodactyla</taxon>
        <taxon>Ruminantia</taxon>
        <taxon>Pecora</taxon>
        <taxon>Bovidae</taxon>
        <taxon>Bovinae</taxon>
        <taxon>Bos</taxon>
    </lineage>
</organism>
<feature type="initiator methionine" description="Removed" evidence="1">
    <location>
        <position position="1"/>
    </location>
</feature>
<feature type="chain" id="PRO_0000265095" description="ADP-ribose glycohydrolase OARD1">
    <location>
        <begin position="2"/>
        <end position="152"/>
    </location>
</feature>
<feature type="domain" description="Macro" evidence="2">
    <location>
        <begin position="2"/>
        <end position="152"/>
    </location>
</feature>
<feature type="active site" description="Nucleophile" evidence="1">
    <location>
        <position position="84"/>
    </location>
</feature>
<feature type="active site" description="Proton acceptor" evidence="1">
    <location>
        <position position="125"/>
    </location>
</feature>
<feature type="binding site" evidence="1">
    <location>
        <position position="21"/>
    </location>
    <ligand>
        <name>substrate</name>
    </ligand>
</feature>
<feature type="binding site" evidence="1">
    <location>
        <begin position="119"/>
        <end position="125"/>
    </location>
    <ligand>
        <name>substrate</name>
    </ligand>
</feature>
<feature type="binding site" evidence="1">
    <location>
        <position position="152"/>
    </location>
    <ligand>
        <name>substrate</name>
    </ligand>
</feature>
<feature type="modified residue" description="N-acetylalanine" evidence="1">
    <location>
        <position position="2"/>
    </location>
</feature>
<feature type="modified residue" description="Phosphoserine" evidence="1">
    <location>
        <position position="4"/>
    </location>
</feature>
<comment type="function">
    <text evidence="1">ADP-ribose glycohydrolase that hydrolyzes ADP-ribose and acts on different substrates, such as proteins ADP-ribosylated on glutamate and O-acetyl-ADP-D-ribose. Specifically acts as a glutamate mono-ADP-ribosylhydrolase by mediating the removal of mono-ADP-ribose attached to glutamate residues on proteins. Does not act on poly-ADP-ribosylated proteins: the poly-ADP-ribose chain of poly-ADP-ribosylated glutamate residues must by hydrolyzed into mono-ADP-ribosylated glutamate by PARG to become a substrate for OARD1. Deacetylates O-acetyl-ADP ribose, a signaling molecule generated by the deacetylation of acetylated lysine residues in histones and other proteins. Catalyzes the deacylation of O-acetyl-ADP-ribose, O-propionyl-ADP-ribose and O-butyryl-ADP-ribose, yielding ADP-ribose plus acetate, propionate and butyrate, respectively.</text>
</comment>
<comment type="catalytic activity">
    <reaction evidence="1">
        <text>2''-O-acetyl-ADP-D-ribose + H2O = ADP-D-ribose + acetate + H(+)</text>
        <dbReference type="Rhea" id="RHEA:57060"/>
        <dbReference type="ChEBI" id="CHEBI:15377"/>
        <dbReference type="ChEBI" id="CHEBI:15378"/>
        <dbReference type="ChEBI" id="CHEBI:30089"/>
        <dbReference type="ChEBI" id="CHEBI:57967"/>
        <dbReference type="ChEBI" id="CHEBI:83767"/>
    </reaction>
</comment>
<comment type="catalytic activity">
    <reaction evidence="1">
        <text>5-O-(ADP-D-ribosyl)-L-glutamyl-[protein] + H2O = L-glutamyl-[protein] + ADP-D-ribose + H(+)</text>
        <dbReference type="Rhea" id="RHEA:58248"/>
        <dbReference type="Rhea" id="RHEA-COMP:10208"/>
        <dbReference type="Rhea" id="RHEA-COMP:15089"/>
        <dbReference type="ChEBI" id="CHEBI:15377"/>
        <dbReference type="ChEBI" id="CHEBI:15378"/>
        <dbReference type="ChEBI" id="CHEBI:29973"/>
        <dbReference type="ChEBI" id="CHEBI:57967"/>
        <dbReference type="ChEBI" id="CHEBI:142540"/>
    </reaction>
</comment>
<comment type="catalytic activity">
    <reaction evidence="1">
        <text>alpha-NAD(+) + H2O = ADP-D-ribose + nicotinamide + H(+)</text>
        <dbReference type="Rhea" id="RHEA:68792"/>
        <dbReference type="ChEBI" id="CHEBI:15377"/>
        <dbReference type="ChEBI" id="CHEBI:15378"/>
        <dbReference type="ChEBI" id="CHEBI:17154"/>
        <dbReference type="ChEBI" id="CHEBI:57967"/>
        <dbReference type="ChEBI" id="CHEBI:77017"/>
    </reaction>
</comment>
<comment type="activity regulation">
    <text evidence="1">Subject to competitive inhibition by the product ADP-ribose.</text>
</comment>
<comment type="subcellular location">
    <subcellularLocation>
        <location evidence="1">Nucleus</location>
        <location evidence="1">Nucleoplasm</location>
    </subcellularLocation>
    <subcellularLocation>
        <location evidence="1">Nucleus</location>
        <location evidence="1">Nucleolus</location>
    </subcellularLocation>
    <subcellularLocation>
        <location evidence="1">Chromosome</location>
    </subcellularLocation>
    <text evidence="1">Localizes both in the nucleoplasm and in the nucleolus. Relocalizes to the nucleoplasm in response to DNA damage. Recruited to DNA lesion regions following DNA damage.</text>
</comment>
<gene>
    <name evidence="1" type="primary">OARD1</name>
</gene>
<sequence length="152" mass="17035">MAGSPNEDSEGSRITYVKGDLFACPQTDSLVHCISEDCRMGAGIAVLFKKKFGGVQELLNQQKKSGEVAVLKRDGRYIYYLITKKRASHKPTYENLRKSLEAMKSHCLKNGVTDLSMPRIGCGLDRLQWENVSAIIEEVFEATDIRITVYTL</sequence>
<accession>Q1LZ74</accession>
<name>OARD1_BOVIN</name>